<gene>
    <name evidence="7" type="primary">pfkb-1.2</name>
    <name evidence="7" type="ORF">K02B2.1</name>
</gene>
<accession>Q21122</accession>
<evidence type="ECO:0000250" key="1"/>
<evidence type="ECO:0000250" key="2">
    <source>
        <dbReference type="UniProtKB" id="P07953"/>
    </source>
</evidence>
<evidence type="ECO:0000250" key="3">
    <source>
        <dbReference type="UniProtKB" id="Q16875"/>
    </source>
</evidence>
<evidence type="ECO:0000255" key="4"/>
<evidence type="ECO:0000256" key="5">
    <source>
        <dbReference type="SAM" id="MobiDB-lite"/>
    </source>
</evidence>
<evidence type="ECO:0000305" key="6"/>
<evidence type="ECO:0000312" key="7">
    <source>
        <dbReference type="WormBase" id="K02B2.1"/>
    </source>
</evidence>
<dbReference type="EC" id="2.7.1.105"/>
<dbReference type="EC" id="3.1.3.46"/>
<dbReference type="EMBL" id="FO080181">
    <property type="protein sequence ID" value="CCD61801.1"/>
    <property type="molecule type" value="Genomic_DNA"/>
</dbReference>
<dbReference type="RefSeq" id="NP_500893.2">
    <property type="nucleotide sequence ID" value="NM_068492.5"/>
</dbReference>
<dbReference type="SMR" id="Q21122"/>
<dbReference type="FunCoup" id="Q21122">
    <property type="interactions" value="2215"/>
</dbReference>
<dbReference type="STRING" id="6239.K02B2.1.1"/>
<dbReference type="PaxDb" id="6239-K02B2.1"/>
<dbReference type="PeptideAtlas" id="Q21122"/>
<dbReference type="EnsemblMetazoa" id="K02B2.1.1">
    <property type="protein sequence ID" value="K02B2.1.1"/>
    <property type="gene ID" value="WBGene00019295"/>
</dbReference>
<dbReference type="GeneID" id="177363"/>
<dbReference type="KEGG" id="cel:CELE_K02B2.1"/>
<dbReference type="UCSC" id="K02B2.1">
    <property type="organism name" value="c. elegans"/>
</dbReference>
<dbReference type="AGR" id="WB:WBGene00019295"/>
<dbReference type="CTD" id="177363"/>
<dbReference type="WormBase" id="K02B2.1">
    <property type="protein sequence ID" value="CE30082"/>
    <property type="gene ID" value="WBGene00019295"/>
    <property type="gene designation" value="pfkb-1.2"/>
</dbReference>
<dbReference type="eggNOG" id="KOG0234">
    <property type="taxonomic scope" value="Eukaryota"/>
</dbReference>
<dbReference type="GeneTree" id="ENSGT00950000182835"/>
<dbReference type="HOGENOM" id="CLU_006383_1_2_1"/>
<dbReference type="InParanoid" id="Q21122"/>
<dbReference type="OMA" id="RCLMGYF"/>
<dbReference type="OrthoDB" id="267323at2759"/>
<dbReference type="PhylomeDB" id="Q21122"/>
<dbReference type="Reactome" id="R-CEL-9634600">
    <property type="pathway name" value="Regulation of glycolysis by fructose 2,6-bisphosphate metabolism"/>
</dbReference>
<dbReference type="PRO" id="PR:Q21122"/>
<dbReference type="Proteomes" id="UP000001940">
    <property type="component" value="Chromosome IV"/>
</dbReference>
<dbReference type="Bgee" id="WBGene00019295">
    <property type="expression patterns" value="Expressed in germ line (C elegans) and 4 other cell types or tissues"/>
</dbReference>
<dbReference type="GO" id="GO:0005829">
    <property type="term" value="C:cytosol"/>
    <property type="evidence" value="ECO:0000318"/>
    <property type="project" value="GO_Central"/>
</dbReference>
<dbReference type="GO" id="GO:0003873">
    <property type="term" value="F:6-phosphofructo-2-kinase activity"/>
    <property type="evidence" value="ECO:0000318"/>
    <property type="project" value="GO_Central"/>
</dbReference>
<dbReference type="GO" id="GO:0005524">
    <property type="term" value="F:ATP binding"/>
    <property type="evidence" value="ECO:0007669"/>
    <property type="project" value="UniProtKB-KW"/>
</dbReference>
<dbReference type="GO" id="GO:0004331">
    <property type="term" value="F:fructose-2,6-bisphosphate 2-phosphatase activity"/>
    <property type="evidence" value="ECO:0000318"/>
    <property type="project" value="GO_Central"/>
</dbReference>
<dbReference type="GO" id="GO:0006003">
    <property type="term" value="P:fructose 2,6-bisphosphate metabolic process"/>
    <property type="evidence" value="ECO:0000318"/>
    <property type="project" value="GO_Central"/>
</dbReference>
<dbReference type="GO" id="GO:0006000">
    <property type="term" value="P:fructose metabolic process"/>
    <property type="evidence" value="ECO:0007669"/>
    <property type="project" value="InterPro"/>
</dbReference>
<dbReference type="CDD" id="cd07067">
    <property type="entry name" value="HP_PGM_like"/>
    <property type="match status" value="1"/>
</dbReference>
<dbReference type="FunFam" id="3.40.50.300:FF:001979">
    <property type="entry name" value="6-phosphofructo-2-kinase/fructose-2,6-bisphosphatase"/>
    <property type="match status" value="1"/>
</dbReference>
<dbReference type="FunFam" id="3.40.50.1240:FF:000005">
    <property type="entry name" value="GpmB, Fructose-2,6-bisphosphatase"/>
    <property type="match status" value="1"/>
</dbReference>
<dbReference type="Gene3D" id="3.40.50.300">
    <property type="entry name" value="P-loop containing nucleotide triphosphate hydrolases"/>
    <property type="match status" value="1"/>
</dbReference>
<dbReference type="Gene3D" id="3.40.50.1240">
    <property type="entry name" value="Phosphoglycerate mutase-like"/>
    <property type="match status" value="1"/>
</dbReference>
<dbReference type="InterPro" id="IPR003094">
    <property type="entry name" value="6Pfruct_kin"/>
</dbReference>
<dbReference type="InterPro" id="IPR013079">
    <property type="entry name" value="6Phosfructo_kin"/>
</dbReference>
<dbReference type="InterPro" id="IPR013078">
    <property type="entry name" value="His_Pase_superF_clade-1"/>
</dbReference>
<dbReference type="InterPro" id="IPR029033">
    <property type="entry name" value="His_PPase_superfam"/>
</dbReference>
<dbReference type="InterPro" id="IPR027417">
    <property type="entry name" value="P-loop_NTPase"/>
</dbReference>
<dbReference type="InterPro" id="IPR001345">
    <property type="entry name" value="PG/BPGM_mutase_AS"/>
</dbReference>
<dbReference type="PANTHER" id="PTHR10606:SF44">
    <property type="entry name" value="6-PHOSPHOFRUCTO 2-KINASE_FRUCTOSE 2,6-BISPHOSPHATASE LONG FORM"/>
    <property type="match status" value="1"/>
</dbReference>
<dbReference type="PANTHER" id="PTHR10606">
    <property type="entry name" value="6-PHOSPHOFRUCTO-2-KINASE/FRUCTOSE-2,6-BISPHOSPHATASE"/>
    <property type="match status" value="1"/>
</dbReference>
<dbReference type="Pfam" id="PF01591">
    <property type="entry name" value="6PF2K"/>
    <property type="match status" value="1"/>
</dbReference>
<dbReference type="Pfam" id="PF00300">
    <property type="entry name" value="His_Phos_1"/>
    <property type="match status" value="1"/>
</dbReference>
<dbReference type="PIRSF" id="PIRSF000709">
    <property type="entry name" value="6PFK_2-Ptase"/>
    <property type="match status" value="1"/>
</dbReference>
<dbReference type="PRINTS" id="PR00991">
    <property type="entry name" value="6PFRUCTKNASE"/>
</dbReference>
<dbReference type="SMART" id="SM00855">
    <property type="entry name" value="PGAM"/>
    <property type="match status" value="1"/>
</dbReference>
<dbReference type="SUPFAM" id="SSF52540">
    <property type="entry name" value="P-loop containing nucleoside triphosphate hydrolases"/>
    <property type="match status" value="1"/>
</dbReference>
<dbReference type="SUPFAM" id="SSF53254">
    <property type="entry name" value="Phosphoglycerate mutase-like"/>
    <property type="match status" value="1"/>
</dbReference>
<dbReference type="PROSITE" id="PS00175">
    <property type="entry name" value="PG_MUTASE"/>
    <property type="match status" value="1"/>
</dbReference>
<protein>
    <recommendedName>
        <fullName evidence="7">6-phosphofructo-2-kinase/fructose-2,6-bisphosphatase</fullName>
        <shortName>6PF-2-K/Fru-2,6-P2ase</shortName>
        <shortName>PFK/FBPase</shortName>
    </recommendedName>
    <domain>
        <recommendedName>
            <fullName>6-phosphofructo-2-kinase</fullName>
            <ecNumber>2.7.1.105</ecNumber>
        </recommendedName>
    </domain>
    <domain>
        <recommendedName>
            <fullName>Fructose-2,6-bisphosphatase</fullName>
            <ecNumber>3.1.3.46</ecNumber>
        </recommendedName>
    </domain>
</protein>
<sequence length="457" mass="52091">MEIPPGLETTKRKVAHSDEHGFSDQVRVPNVIVMVGLPARGKTYISKKLCRYLKWTGFTTKVFNVGEYRRSDANAADAIHGANASFFSPNNADALKVRAESARRAMEDMADYLNSGTGGVAIFDATNTTKDRRRIIIDFCKKQRLRCFFIESVCDDPAIIDCNVTDVKVNSPDYKGLMTAEQAKEDFMNRIENYKKQYEPLDESEDESLSFIKVINAGRSFKVHQVRGHVQSRVVYFLMNIHLLPRSIYLTRHGQSEYNAMGRLGGDSPLTEDGQKYASALADFFEEEEVPGLRVWCSQKVRAAQTAQHLKPDFHTEYWKALDELDAGICEGLTYEDILQRYPKQADDRATDKYHYRYPSGESYEDVVSRLEPVIMELERQANVLVVSHQAVLRCVLAYFYDRPLSELPYIDIPLHSLVKLTPRAYHCDSTIYALDLESGEWTETSDQLPLCDSPRD</sequence>
<keyword id="KW-0067">ATP-binding</keyword>
<keyword id="KW-0378">Hydrolase</keyword>
<keyword id="KW-0418">Kinase</keyword>
<keyword id="KW-0511">Multifunctional enzyme</keyword>
<keyword id="KW-0547">Nucleotide-binding</keyword>
<keyword id="KW-1185">Reference proteome</keyword>
<keyword id="KW-0808">Transferase</keyword>
<feature type="chain" id="PRO_0000179974" description="6-phosphofructo-2-kinase/fructose-2,6-bisphosphatase" evidence="6">
    <location>
        <begin position="1"/>
        <end position="457"/>
    </location>
</feature>
<feature type="region of interest" description="6-phosphofructo-2-kinase">
    <location>
        <begin position="1"/>
        <end position="244"/>
    </location>
</feature>
<feature type="region of interest" description="Disordered" evidence="5">
    <location>
        <begin position="1"/>
        <end position="20"/>
    </location>
</feature>
<feature type="region of interest" description="Fructose-2,6-bisphosphatase">
    <location>
        <begin position="245"/>
        <end position="457"/>
    </location>
</feature>
<feature type="compositionally biased region" description="Basic and acidic residues" evidence="5">
    <location>
        <begin position="9"/>
        <end position="20"/>
    </location>
</feature>
<feature type="active site" evidence="4">
    <location>
        <position position="124"/>
    </location>
</feature>
<feature type="active site" evidence="4">
    <location>
        <position position="154"/>
    </location>
</feature>
<feature type="active site" description="Tele-phosphohistidine intermediate" evidence="3">
    <location>
        <position position="253"/>
    </location>
</feature>
<feature type="active site" description="Proton donor/acceptor" evidence="3">
    <location>
        <position position="324"/>
    </location>
</feature>
<feature type="binding site" evidence="3">
    <location>
        <begin position="36"/>
        <end position="44"/>
    </location>
    <ligand>
        <name>ATP</name>
        <dbReference type="ChEBI" id="CHEBI:30616"/>
    </ligand>
</feature>
<feature type="binding site" evidence="3">
    <location>
        <position position="69"/>
    </location>
    <ligand>
        <name>beta-D-fructose 6-phosphate</name>
        <dbReference type="ChEBI" id="CHEBI:57634"/>
    </ligand>
</feature>
<feature type="binding site" evidence="3">
    <location>
        <position position="98"/>
    </location>
    <ligand>
        <name>beta-D-fructose 6-phosphate</name>
        <dbReference type="ChEBI" id="CHEBI:57634"/>
    </ligand>
</feature>
<feature type="binding site" evidence="3">
    <location>
        <position position="126"/>
    </location>
    <ligand>
        <name>beta-D-fructose 6-phosphate</name>
        <dbReference type="ChEBI" id="CHEBI:57634"/>
    </ligand>
</feature>
<feature type="binding site" evidence="3">
    <location>
        <position position="132"/>
    </location>
    <ligand>
        <name>beta-D-fructose 6-phosphate</name>
        <dbReference type="ChEBI" id="CHEBI:57634"/>
    </ligand>
</feature>
<feature type="binding site" evidence="3">
    <location>
        <begin position="163"/>
        <end position="168"/>
    </location>
    <ligand>
        <name>ATP</name>
        <dbReference type="ChEBI" id="CHEBI:30616"/>
    </ligand>
</feature>
<feature type="binding site" evidence="3">
    <location>
        <position position="168"/>
    </location>
    <ligand>
        <name>beta-D-fructose 6-phosphate</name>
        <dbReference type="ChEBI" id="CHEBI:57634"/>
    </ligand>
</feature>
<feature type="binding site" evidence="3">
    <location>
        <position position="190"/>
    </location>
    <ligand>
        <name>beta-D-fructose 6-phosphate</name>
        <dbReference type="ChEBI" id="CHEBI:57634"/>
    </ligand>
</feature>
<feature type="binding site" evidence="3">
    <location>
        <position position="194"/>
    </location>
    <ligand>
        <name>beta-D-fructose 6-phosphate</name>
        <dbReference type="ChEBI" id="CHEBI:57634"/>
    </ligand>
</feature>
<feature type="binding site" evidence="3">
    <location>
        <position position="252"/>
    </location>
    <ligand>
        <name>beta-D-fructose 2,6-bisphosphate</name>
        <dbReference type="ChEBI" id="CHEBI:58579"/>
    </ligand>
</feature>
<feature type="binding site" evidence="3">
    <location>
        <position position="259"/>
    </location>
    <ligand>
        <name>beta-D-fructose 2,6-bisphosphate</name>
        <dbReference type="ChEBI" id="CHEBI:58579"/>
    </ligand>
</feature>
<feature type="binding site" evidence="3">
    <location>
        <position position="265"/>
    </location>
    <ligand>
        <name>beta-D-fructose 2,6-bisphosphate</name>
        <dbReference type="ChEBI" id="CHEBI:58579"/>
    </ligand>
</feature>
<feature type="binding site" evidence="3">
    <location>
        <position position="335"/>
    </location>
    <ligand>
        <name>beta-D-fructose 2,6-bisphosphate</name>
        <dbReference type="ChEBI" id="CHEBI:58579"/>
    </ligand>
</feature>
<feature type="binding site" evidence="2">
    <location>
        <begin position="346"/>
        <end position="349"/>
    </location>
    <ligand>
        <name>ATP</name>
        <dbReference type="ChEBI" id="CHEBI:30616"/>
    </ligand>
</feature>
<feature type="binding site" evidence="3">
    <location>
        <position position="349"/>
    </location>
    <ligand>
        <name>beta-D-fructose 2,6-bisphosphate</name>
        <dbReference type="ChEBI" id="CHEBI:58579"/>
    </ligand>
</feature>
<feature type="binding site" evidence="3">
    <location>
        <position position="353"/>
    </location>
    <ligand>
        <name>beta-D-fructose 2,6-bisphosphate</name>
        <dbReference type="ChEBI" id="CHEBI:58579"/>
    </ligand>
</feature>
<feature type="binding site" evidence="3">
    <location>
        <position position="364"/>
    </location>
    <ligand>
        <name>beta-D-fructose 2,6-bisphosphate</name>
        <dbReference type="ChEBI" id="CHEBI:58579"/>
    </ligand>
</feature>
<feature type="binding site" evidence="2">
    <location>
        <begin position="390"/>
        <end position="394"/>
    </location>
    <ligand>
        <name>ATP</name>
        <dbReference type="ChEBI" id="CHEBI:30616"/>
    </ligand>
</feature>
<feature type="binding site" evidence="3">
    <location>
        <position position="390"/>
    </location>
    <ligand>
        <name>beta-D-fructose 2,6-bisphosphate</name>
        <dbReference type="ChEBI" id="CHEBI:58579"/>
    </ligand>
</feature>
<feature type="binding site" evidence="2">
    <location>
        <position position="394"/>
    </location>
    <ligand>
        <name>beta-D-fructose 2,6-bisphosphate</name>
        <dbReference type="ChEBI" id="CHEBI:58579"/>
    </ligand>
</feature>
<feature type="binding site" evidence="3">
    <location>
        <position position="426"/>
    </location>
    <ligand>
        <name>ATP</name>
        <dbReference type="ChEBI" id="CHEBI:30616"/>
    </ligand>
</feature>
<feature type="site" description="Transition state stabilizer" evidence="3">
    <location>
        <position position="252"/>
    </location>
</feature>
<feature type="site" description="Transition state stabilizer" evidence="3">
    <location>
        <position position="259"/>
    </location>
</feature>
<feature type="site" description="Transition state stabilizer" evidence="3">
    <location>
        <position position="389"/>
    </location>
</feature>
<name>F2612_CAEEL</name>
<organism>
    <name type="scientific">Caenorhabditis elegans</name>
    <dbReference type="NCBI Taxonomy" id="6239"/>
    <lineage>
        <taxon>Eukaryota</taxon>
        <taxon>Metazoa</taxon>
        <taxon>Ecdysozoa</taxon>
        <taxon>Nematoda</taxon>
        <taxon>Chromadorea</taxon>
        <taxon>Rhabditida</taxon>
        <taxon>Rhabditina</taxon>
        <taxon>Rhabditomorpha</taxon>
        <taxon>Rhabditoidea</taxon>
        <taxon>Rhabditidae</taxon>
        <taxon>Peloderinae</taxon>
        <taxon>Caenorhabditis</taxon>
    </lineage>
</organism>
<proteinExistence type="inferred from homology"/>
<reference key="1">
    <citation type="journal article" date="1998" name="Science">
        <title>Genome sequence of the nematode C. elegans: a platform for investigating biology.</title>
        <authorList>
            <consortium name="The C. elegans sequencing consortium"/>
        </authorList>
    </citation>
    <scope>NUCLEOTIDE SEQUENCE [LARGE SCALE GENOMIC DNA]</scope>
    <source>
        <strain>Bristol N2</strain>
    </source>
</reference>
<comment type="function">
    <text evidence="1">Synthesis and degradation of fructose 2,6-bisphosphate.</text>
</comment>
<comment type="catalytic activity">
    <reaction>
        <text>beta-D-fructose 2,6-bisphosphate + H2O = beta-D-fructose 6-phosphate + phosphate</text>
        <dbReference type="Rhea" id="RHEA:17289"/>
        <dbReference type="ChEBI" id="CHEBI:15377"/>
        <dbReference type="ChEBI" id="CHEBI:43474"/>
        <dbReference type="ChEBI" id="CHEBI:57634"/>
        <dbReference type="ChEBI" id="CHEBI:58579"/>
        <dbReference type="EC" id="3.1.3.46"/>
    </reaction>
</comment>
<comment type="catalytic activity">
    <reaction>
        <text>beta-D-fructose 6-phosphate + ATP = beta-D-fructose 2,6-bisphosphate + ADP + H(+)</text>
        <dbReference type="Rhea" id="RHEA:15653"/>
        <dbReference type="ChEBI" id="CHEBI:15378"/>
        <dbReference type="ChEBI" id="CHEBI:30616"/>
        <dbReference type="ChEBI" id="CHEBI:57634"/>
        <dbReference type="ChEBI" id="CHEBI:58579"/>
        <dbReference type="ChEBI" id="CHEBI:456216"/>
        <dbReference type="EC" id="2.7.1.105"/>
    </reaction>
</comment>
<comment type="similarity">
    <text evidence="6">In the C-terminal section; belongs to the phosphoglycerate mutase family.</text>
</comment>